<gene>
    <name type="ordered locus">Ent638_1570</name>
</gene>
<protein>
    <recommendedName>
        <fullName evidence="1">UPF0312 protein Ent638_1570</fullName>
    </recommendedName>
</protein>
<name>Y1570_ENT38</name>
<evidence type="ECO:0000255" key="1">
    <source>
        <dbReference type="HAMAP-Rule" id="MF_00780"/>
    </source>
</evidence>
<dbReference type="EMBL" id="CP000653">
    <property type="protein sequence ID" value="ABP60249.1"/>
    <property type="molecule type" value="Genomic_DNA"/>
</dbReference>
<dbReference type="RefSeq" id="WP_012016966.1">
    <property type="nucleotide sequence ID" value="NC_009436.1"/>
</dbReference>
<dbReference type="SMR" id="A4W969"/>
<dbReference type="STRING" id="399742.Ent638_1570"/>
<dbReference type="KEGG" id="ent:Ent638_1570"/>
<dbReference type="eggNOG" id="COG2353">
    <property type="taxonomic scope" value="Bacteria"/>
</dbReference>
<dbReference type="HOGENOM" id="CLU_071003_1_2_6"/>
<dbReference type="OrthoDB" id="9811006at2"/>
<dbReference type="Proteomes" id="UP000000230">
    <property type="component" value="Chromosome"/>
</dbReference>
<dbReference type="GO" id="GO:0042597">
    <property type="term" value="C:periplasmic space"/>
    <property type="evidence" value="ECO:0007669"/>
    <property type="project" value="UniProtKB-SubCell"/>
</dbReference>
<dbReference type="Gene3D" id="2.40.128.110">
    <property type="entry name" value="Lipid/polyisoprenoid-binding, YceI-like"/>
    <property type="match status" value="1"/>
</dbReference>
<dbReference type="HAMAP" id="MF_00780">
    <property type="entry name" value="UPF0312"/>
    <property type="match status" value="1"/>
</dbReference>
<dbReference type="InterPro" id="IPR007372">
    <property type="entry name" value="Lipid/polyisoprenoid-bd_YceI"/>
</dbReference>
<dbReference type="InterPro" id="IPR036761">
    <property type="entry name" value="TTHA0802/YceI-like_sf"/>
</dbReference>
<dbReference type="InterPro" id="IPR023480">
    <property type="entry name" value="UPF0312/YceI"/>
</dbReference>
<dbReference type="NCBIfam" id="NF002994">
    <property type="entry name" value="PRK03757.1"/>
    <property type="match status" value="1"/>
</dbReference>
<dbReference type="PANTHER" id="PTHR34406">
    <property type="entry name" value="PROTEIN YCEI"/>
    <property type="match status" value="1"/>
</dbReference>
<dbReference type="PANTHER" id="PTHR34406:SF1">
    <property type="entry name" value="PROTEIN YCEI"/>
    <property type="match status" value="1"/>
</dbReference>
<dbReference type="Pfam" id="PF04264">
    <property type="entry name" value="YceI"/>
    <property type="match status" value="1"/>
</dbReference>
<dbReference type="SMART" id="SM00867">
    <property type="entry name" value="YceI"/>
    <property type="match status" value="1"/>
</dbReference>
<dbReference type="SUPFAM" id="SSF101874">
    <property type="entry name" value="YceI-like"/>
    <property type="match status" value="1"/>
</dbReference>
<keyword id="KW-0574">Periplasm</keyword>
<keyword id="KW-0732">Signal</keyword>
<reference key="1">
    <citation type="journal article" date="2010" name="PLoS Genet.">
        <title>Genome sequence of the plant growth promoting endophytic bacterium Enterobacter sp. 638.</title>
        <authorList>
            <person name="Taghavi S."/>
            <person name="van der Lelie D."/>
            <person name="Hoffman A."/>
            <person name="Zhang Y.B."/>
            <person name="Walla M.D."/>
            <person name="Vangronsveld J."/>
            <person name="Newman L."/>
            <person name="Monchy S."/>
        </authorList>
    </citation>
    <scope>NUCLEOTIDE SEQUENCE [LARGE SCALE GENOMIC DNA]</scope>
    <source>
        <strain>638</strain>
    </source>
</reference>
<feature type="signal peptide" evidence="1">
    <location>
        <begin position="1"/>
        <end position="22"/>
    </location>
</feature>
<feature type="chain" id="PRO_5000237828" description="UPF0312 protein Ent638_1570">
    <location>
        <begin position="23"/>
        <end position="192"/>
    </location>
</feature>
<accession>A4W969</accession>
<comment type="subcellular location">
    <subcellularLocation>
        <location evidence="1">Periplasm</location>
    </subcellularLocation>
</comment>
<comment type="similarity">
    <text evidence="1">Belongs to the UPF0312 family. Type 1 subfamily.</text>
</comment>
<proteinExistence type="inferred from homology"/>
<sequence>MKKRLLGIALGSLLFTTGSAVAADYKIDKEGQHAFVNFRIQHLGYSWLYGTFKDFDGSFTFDEKNPAADKVNVTINTNSLDTNHAERDKHLRSAEFLNVAKFPQATFASTEVKKDGEDLDITGNLTLNGVTKPVTLEAKLIGQGDDPWGGKRAGFEASGKIRLKDFNITTDLGPASQEVDLIISVEGVQQKS</sequence>
<organism>
    <name type="scientific">Enterobacter sp. (strain 638)</name>
    <dbReference type="NCBI Taxonomy" id="399742"/>
    <lineage>
        <taxon>Bacteria</taxon>
        <taxon>Pseudomonadati</taxon>
        <taxon>Pseudomonadota</taxon>
        <taxon>Gammaproteobacteria</taxon>
        <taxon>Enterobacterales</taxon>
        <taxon>Enterobacteriaceae</taxon>
        <taxon>Enterobacter</taxon>
    </lineage>
</organism>